<feature type="chain" id="PRO_1000123606" description="DNA-binding protein Fis">
    <location>
        <begin position="1"/>
        <end position="98"/>
    </location>
</feature>
<feature type="DNA-binding region" description="H-T-H motif" evidence="1">
    <location>
        <begin position="74"/>
        <end position="93"/>
    </location>
</feature>
<keyword id="KW-0010">Activator</keyword>
<keyword id="KW-0238">DNA-binding</keyword>
<keyword id="KW-1185">Reference proteome</keyword>
<keyword id="KW-0804">Transcription</keyword>
<keyword id="KW-0805">Transcription regulation</keyword>
<gene>
    <name evidence="1" type="primary">fis</name>
    <name type="ordered locus">EC55989_3675</name>
</gene>
<dbReference type="EMBL" id="CU928145">
    <property type="protein sequence ID" value="CAU99948.1"/>
    <property type="molecule type" value="Genomic_DNA"/>
</dbReference>
<dbReference type="RefSeq" id="WP_000462905.1">
    <property type="nucleotide sequence ID" value="NZ_CP028304.1"/>
</dbReference>
<dbReference type="SMR" id="B7LHW8"/>
<dbReference type="GeneID" id="98390389"/>
<dbReference type="KEGG" id="eck:EC55989_3675"/>
<dbReference type="HOGENOM" id="CLU_158040_3_0_6"/>
<dbReference type="Proteomes" id="UP000000746">
    <property type="component" value="Chromosome"/>
</dbReference>
<dbReference type="GO" id="GO:0003700">
    <property type="term" value="F:DNA-binding transcription factor activity"/>
    <property type="evidence" value="ECO:0007669"/>
    <property type="project" value="UniProtKB-UniRule"/>
</dbReference>
<dbReference type="GO" id="GO:0043565">
    <property type="term" value="F:sequence-specific DNA binding"/>
    <property type="evidence" value="ECO:0007669"/>
    <property type="project" value="InterPro"/>
</dbReference>
<dbReference type="FunFam" id="1.10.10.60:FF:000006">
    <property type="entry name" value="DNA-binding protein Fis"/>
    <property type="match status" value="1"/>
</dbReference>
<dbReference type="Gene3D" id="1.10.10.60">
    <property type="entry name" value="Homeodomain-like"/>
    <property type="match status" value="1"/>
</dbReference>
<dbReference type="HAMAP" id="MF_00166">
    <property type="entry name" value="DNA_binding_Fis"/>
    <property type="match status" value="1"/>
</dbReference>
<dbReference type="InterPro" id="IPR005412">
    <property type="entry name" value="Fis_DNA-bd"/>
</dbReference>
<dbReference type="InterPro" id="IPR009057">
    <property type="entry name" value="Homeodomain-like_sf"/>
</dbReference>
<dbReference type="InterPro" id="IPR002197">
    <property type="entry name" value="HTH_Fis"/>
</dbReference>
<dbReference type="InterPro" id="IPR050207">
    <property type="entry name" value="Trans_regulatory_Fis"/>
</dbReference>
<dbReference type="NCBIfam" id="NF001659">
    <property type="entry name" value="PRK00430.1"/>
    <property type="match status" value="1"/>
</dbReference>
<dbReference type="PANTHER" id="PTHR47918">
    <property type="entry name" value="DNA-BINDING PROTEIN FIS"/>
    <property type="match status" value="1"/>
</dbReference>
<dbReference type="PANTHER" id="PTHR47918:SF1">
    <property type="entry name" value="DNA-BINDING PROTEIN FIS"/>
    <property type="match status" value="1"/>
</dbReference>
<dbReference type="Pfam" id="PF02954">
    <property type="entry name" value="HTH_8"/>
    <property type="match status" value="1"/>
</dbReference>
<dbReference type="PIRSF" id="PIRSF002097">
    <property type="entry name" value="DNA-binding_Fis"/>
    <property type="match status" value="1"/>
</dbReference>
<dbReference type="PRINTS" id="PR01591">
    <property type="entry name" value="DNABINDNGFIS"/>
</dbReference>
<dbReference type="PRINTS" id="PR01590">
    <property type="entry name" value="HTHFIS"/>
</dbReference>
<dbReference type="SUPFAM" id="SSF46689">
    <property type="entry name" value="Homeodomain-like"/>
    <property type="match status" value="1"/>
</dbReference>
<organism>
    <name type="scientific">Escherichia coli (strain 55989 / EAEC)</name>
    <dbReference type="NCBI Taxonomy" id="585055"/>
    <lineage>
        <taxon>Bacteria</taxon>
        <taxon>Pseudomonadati</taxon>
        <taxon>Pseudomonadota</taxon>
        <taxon>Gammaproteobacteria</taxon>
        <taxon>Enterobacterales</taxon>
        <taxon>Enterobacteriaceae</taxon>
        <taxon>Escherichia</taxon>
    </lineage>
</organism>
<reference key="1">
    <citation type="journal article" date="2009" name="PLoS Genet.">
        <title>Organised genome dynamics in the Escherichia coli species results in highly diverse adaptive paths.</title>
        <authorList>
            <person name="Touchon M."/>
            <person name="Hoede C."/>
            <person name="Tenaillon O."/>
            <person name="Barbe V."/>
            <person name="Baeriswyl S."/>
            <person name="Bidet P."/>
            <person name="Bingen E."/>
            <person name="Bonacorsi S."/>
            <person name="Bouchier C."/>
            <person name="Bouvet O."/>
            <person name="Calteau A."/>
            <person name="Chiapello H."/>
            <person name="Clermont O."/>
            <person name="Cruveiller S."/>
            <person name="Danchin A."/>
            <person name="Diard M."/>
            <person name="Dossat C."/>
            <person name="Karoui M.E."/>
            <person name="Frapy E."/>
            <person name="Garry L."/>
            <person name="Ghigo J.M."/>
            <person name="Gilles A.M."/>
            <person name="Johnson J."/>
            <person name="Le Bouguenec C."/>
            <person name="Lescat M."/>
            <person name="Mangenot S."/>
            <person name="Martinez-Jehanne V."/>
            <person name="Matic I."/>
            <person name="Nassif X."/>
            <person name="Oztas S."/>
            <person name="Petit M.A."/>
            <person name="Pichon C."/>
            <person name="Rouy Z."/>
            <person name="Ruf C.S."/>
            <person name="Schneider D."/>
            <person name="Tourret J."/>
            <person name="Vacherie B."/>
            <person name="Vallenet D."/>
            <person name="Medigue C."/>
            <person name="Rocha E.P.C."/>
            <person name="Denamur E."/>
        </authorList>
    </citation>
    <scope>NUCLEOTIDE SEQUENCE [LARGE SCALE GENOMIC DNA]</scope>
    <source>
        <strain>55989 / EAEC</strain>
    </source>
</reference>
<comment type="function">
    <text evidence="1">Activates ribosomal RNA transcription. Plays a direct role in upstream activation of rRNA promoters.</text>
</comment>
<comment type="subunit">
    <text evidence="1">Homodimer.</text>
</comment>
<comment type="similarity">
    <text evidence="1">Belongs to the transcriptional regulatory Fis family.</text>
</comment>
<name>FIS_ECO55</name>
<proteinExistence type="inferred from homology"/>
<evidence type="ECO:0000255" key="1">
    <source>
        <dbReference type="HAMAP-Rule" id="MF_00166"/>
    </source>
</evidence>
<protein>
    <recommendedName>
        <fullName evidence="1">DNA-binding protein Fis</fullName>
    </recommendedName>
</protein>
<sequence>MFEQRVNSDVLTVSTVNSQDQVTQKPLRDSVKQALKNYFAQLNGQDVNDLYELVLAEVEQPLLDMVMQYTRGNQTRAALMMGINRGTLRKKLKKYGMN</sequence>
<accession>B7LHW8</accession>